<dbReference type="EC" id="1.13.11.29"/>
<dbReference type="EMBL" id="AB435372">
    <property type="protein sequence ID" value="BAG80686.1"/>
    <property type="molecule type" value="mRNA"/>
</dbReference>
<dbReference type="SMR" id="B6F0W8"/>
<dbReference type="UniPathway" id="UPA00278"/>
<dbReference type="GO" id="GO:0005737">
    <property type="term" value="C:cytoplasm"/>
    <property type="evidence" value="ECO:0007669"/>
    <property type="project" value="UniProtKB-SubCell"/>
</dbReference>
<dbReference type="GO" id="GO:0008198">
    <property type="term" value="F:ferrous iron binding"/>
    <property type="evidence" value="ECO:0007669"/>
    <property type="project" value="InterPro"/>
</dbReference>
<dbReference type="GO" id="GO:0050297">
    <property type="term" value="F:stizolobate synthase activity"/>
    <property type="evidence" value="ECO:0000314"/>
    <property type="project" value="UniProtKB"/>
</dbReference>
<dbReference type="GO" id="GO:0008270">
    <property type="term" value="F:zinc ion binding"/>
    <property type="evidence" value="ECO:0007669"/>
    <property type="project" value="InterPro"/>
</dbReference>
<dbReference type="GO" id="GO:0046148">
    <property type="term" value="P:pigment biosynthetic process"/>
    <property type="evidence" value="ECO:0000314"/>
    <property type="project" value="UniProtKB"/>
</dbReference>
<dbReference type="CDD" id="cd07363">
    <property type="entry name" value="45_DOPA_Dioxygenase"/>
    <property type="match status" value="1"/>
</dbReference>
<dbReference type="FunFam" id="3.40.830.10:FF:000003">
    <property type="entry name" value="4,5-DOPA dioxygenase extradiol"/>
    <property type="match status" value="1"/>
</dbReference>
<dbReference type="Gene3D" id="3.40.830.10">
    <property type="entry name" value="LigB-like"/>
    <property type="match status" value="1"/>
</dbReference>
<dbReference type="InterPro" id="IPR014436">
    <property type="entry name" value="Extradiol_dOase_DODA"/>
</dbReference>
<dbReference type="InterPro" id="IPR004183">
    <property type="entry name" value="Xdiol_dOase_suB"/>
</dbReference>
<dbReference type="PANTHER" id="PTHR30096">
    <property type="entry name" value="4,5-DOPA DIOXYGENASE EXTRADIOL-LIKE PROTEIN"/>
    <property type="match status" value="1"/>
</dbReference>
<dbReference type="PANTHER" id="PTHR30096:SF0">
    <property type="entry name" value="4,5-DOPA DIOXYGENASE EXTRADIOL-LIKE PROTEIN"/>
    <property type="match status" value="1"/>
</dbReference>
<dbReference type="Pfam" id="PF02900">
    <property type="entry name" value="LigB"/>
    <property type="match status" value="1"/>
</dbReference>
<dbReference type="PIRSF" id="PIRSF006157">
    <property type="entry name" value="Doxgns_DODA"/>
    <property type="match status" value="1"/>
</dbReference>
<dbReference type="SUPFAM" id="SSF53213">
    <property type="entry name" value="LigB-like"/>
    <property type="match status" value="1"/>
</dbReference>
<proteinExistence type="evidence at protein level"/>
<feature type="chain" id="PRO_0000424075" description="4,5-DOPA dioxygenase extradiol">
    <location>
        <begin position="1"/>
        <end position="267"/>
    </location>
</feature>
<feature type="binding site" evidence="1">
    <location>
        <position position="9"/>
    </location>
    <ligand>
        <name>Zn(2+)</name>
        <dbReference type="ChEBI" id="CHEBI:29105"/>
    </ligand>
</feature>
<feature type="binding site" evidence="1">
    <location>
        <position position="47"/>
    </location>
    <ligand>
        <name>Zn(2+)</name>
        <dbReference type="ChEBI" id="CHEBI:29105"/>
    </ligand>
</feature>
<feature type="binding site" evidence="1">
    <location>
        <position position="168"/>
    </location>
    <ligand>
        <name>Zn(2+)</name>
        <dbReference type="ChEBI" id="CHEBI:29105"/>
    </ligand>
</feature>
<feature type="binding site" evidence="1">
    <location>
        <position position="222"/>
    </location>
    <ligand>
        <name>Zn(2+)</name>
        <dbReference type="ChEBI" id="CHEBI:29105"/>
    </ligand>
</feature>
<name>DODA_MIRJA</name>
<evidence type="ECO:0000250" key="1"/>
<evidence type="ECO:0000269" key="2">
    <source>
    </source>
</evidence>
<evidence type="ECO:0000305" key="3"/>
<evidence type="ECO:0000305" key="4">
    <source>
    </source>
</evidence>
<accession>B6F0W8</accession>
<protein>
    <recommendedName>
        <fullName>4,5-DOPA dioxygenase extradiol</fullName>
        <shortName>MjDOD</shortName>
        <ecNumber>1.13.11.29</ecNumber>
    </recommendedName>
    <alternativeName>
        <fullName>DOPA 4,5-dioxygenase</fullName>
    </alternativeName>
</protein>
<gene>
    <name type="primary">DOD</name>
</gene>
<sequence>MKGTYYINHGDPLMYLKKHIKLRQFLEGWQENVVIEKPKSILIISAHWDTNVPTVNFVEHCDTIHDFDDYPDPLYQIQYRAPGAPNLAKKVEELLKESGMECEIDTKRGLDHAAWFPLMFMYPEANIPICELSVQPSKDGIHHYNVGKALSPLLQQGVLIIGSGGTVHPSDDTPHCPNGVAPWAIEFDNWLEDALLSGRYEDVNNFKKLAPNWEISHPGQEHLYPLHVALGAAGKNPKTQLIHRSWAANGVFGYSTYNFTPTTQKTD</sequence>
<comment type="function">
    <text evidence="2">Opens the cyclic ring of dihydroxy-phenylalanine (DOPA) between carbons 4 and 5, thus producing an unstable seco-DOPA that rearranges nonenzymatically to betalamic acid. Produces mainly (S)-betalamic acid. Required for the coloration of flowers.</text>
</comment>
<comment type="catalytic activity">
    <reaction evidence="2">
        <text>L-dopa + O2 = 4-(L-alanin-3-yl)-2-hydroxy-cis,cis-muconate 6-semialdehyde + H(+)</text>
        <dbReference type="Rhea" id="RHEA:21220"/>
        <dbReference type="ChEBI" id="CHEBI:15378"/>
        <dbReference type="ChEBI" id="CHEBI:15379"/>
        <dbReference type="ChEBI" id="CHEBI:57504"/>
        <dbReference type="ChEBI" id="CHEBI:57639"/>
        <dbReference type="EC" id="1.13.11.29"/>
    </reaction>
</comment>
<comment type="cofactor">
    <cofactor evidence="1">
        <name>Zn(2+)</name>
        <dbReference type="ChEBI" id="CHEBI:29105"/>
    </cofactor>
    <text evidence="1">Binds 1 zinc ion per subunit.</text>
</comment>
<comment type="cofactor">
    <cofactor evidence="2">
        <name>Fe(2+)</name>
        <dbReference type="ChEBI" id="CHEBI:29033"/>
    </cofactor>
</comment>
<comment type="pathway">
    <text>Pigment biosynthesis; betalain biosynthesis.</text>
</comment>
<comment type="subcellular location">
    <subcellularLocation>
        <location evidence="3">Cytoplasm</location>
    </subcellularLocation>
</comment>
<comment type="tissue specificity">
    <text evidence="2">Expressed in petals. Not detected in leaves, stems and roots.</text>
</comment>
<comment type="miscellaneous">
    <text evidence="4">Requires ascorbic acid for iron to be in the proper redox state (PubMed:19366710). For the same enzyme from B.vulgaris (AC Q70FG7), presence of Fe(2+) is not necessary to detect activity.</text>
</comment>
<comment type="similarity">
    <text evidence="3">Belongs to the DODA-type extradiol aromatic ring-opening dioxygenase family.</text>
</comment>
<organism>
    <name type="scientific">Mirabilis jalapa</name>
    <name type="common">Garden four-o'clock</name>
    <dbReference type="NCBI Taxonomy" id="3538"/>
    <lineage>
        <taxon>Eukaryota</taxon>
        <taxon>Viridiplantae</taxon>
        <taxon>Streptophyta</taxon>
        <taxon>Embryophyta</taxon>
        <taxon>Tracheophyta</taxon>
        <taxon>Spermatophyta</taxon>
        <taxon>Magnoliopsida</taxon>
        <taxon>eudicotyledons</taxon>
        <taxon>Gunneridae</taxon>
        <taxon>Pentapetalae</taxon>
        <taxon>Caryophyllales</taxon>
        <taxon>Nyctaginaceae</taxon>
        <taxon>Mirabilis</taxon>
    </lineage>
</organism>
<keyword id="KW-0963">Cytoplasm</keyword>
<keyword id="KW-0223">Dioxygenase</keyword>
<keyword id="KW-0408">Iron</keyword>
<keyword id="KW-0479">Metal-binding</keyword>
<keyword id="KW-0560">Oxidoreductase</keyword>
<keyword id="KW-0862">Zinc</keyword>
<reference key="1">
    <citation type="journal article" date="2009" name="Plant Cell Physiol.">
        <title>Detection of DOPA 4,5-dioxygenase (DOD) activity using recombinant protein prepared from Escherichia coli cells harboring cDNA encoding DOD from Mirabilis jalapa.</title>
        <authorList>
            <person name="Sasaki N."/>
            <person name="Abe Y."/>
            <person name="Goda Y."/>
            <person name="Adachi T."/>
            <person name="Kasahara K."/>
            <person name="Ozeki Y."/>
        </authorList>
    </citation>
    <scope>NUCLEOTIDE SEQUENCE [MRNA]</scope>
    <scope>FUNCTION</scope>
    <scope>CATALYTIC ACTIVITY</scope>
    <scope>COFACTOR</scope>
    <scope>TISSUE SPECIFICITY</scope>
</reference>